<dbReference type="EC" id="4.1.1.20" evidence="2"/>
<dbReference type="EMBL" id="L42023">
    <property type="protein sequence ID" value="AAC22385.1"/>
    <property type="molecule type" value="Genomic_DNA"/>
</dbReference>
<dbReference type="PIR" id="B64089">
    <property type="entry name" value="B64089"/>
</dbReference>
<dbReference type="RefSeq" id="NP_438885.1">
    <property type="nucleotide sequence ID" value="NC_000907.1"/>
</dbReference>
<dbReference type="SMR" id="P44316"/>
<dbReference type="STRING" id="71421.HI_0727"/>
<dbReference type="EnsemblBacteria" id="AAC22385">
    <property type="protein sequence ID" value="AAC22385"/>
    <property type="gene ID" value="HI_0727"/>
</dbReference>
<dbReference type="KEGG" id="hin:HI_0727"/>
<dbReference type="PATRIC" id="fig|71421.8.peg.759"/>
<dbReference type="eggNOG" id="COG0019">
    <property type="taxonomic scope" value="Bacteria"/>
</dbReference>
<dbReference type="HOGENOM" id="CLU_026444_0_0_6"/>
<dbReference type="OrthoDB" id="9802241at2"/>
<dbReference type="PhylomeDB" id="P44316"/>
<dbReference type="BioCyc" id="HINF71421:G1GJ1-766-MONOMER"/>
<dbReference type="UniPathway" id="UPA00034">
    <property type="reaction ID" value="UER00027"/>
</dbReference>
<dbReference type="Proteomes" id="UP000000579">
    <property type="component" value="Chromosome"/>
</dbReference>
<dbReference type="GO" id="GO:0008836">
    <property type="term" value="F:diaminopimelate decarboxylase activity"/>
    <property type="evidence" value="ECO:0000318"/>
    <property type="project" value="GO_Central"/>
</dbReference>
<dbReference type="GO" id="GO:0030170">
    <property type="term" value="F:pyridoxal phosphate binding"/>
    <property type="evidence" value="ECO:0007669"/>
    <property type="project" value="UniProtKB-UniRule"/>
</dbReference>
<dbReference type="GO" id="GO:0009089">
    <property type="term" value="P:lysine biosynthetic process via diaminopimelate"/>
    <property type="evidence" value="ECO:0000318"/>
    <property type="project" value="GO_Central"/>
</dbReference>
<dbReference type="CDD" id="cd06828">
    <property type="entry name" value="PLPDE_III_DapDC"/>
    <property type="match status" value="1"/>
</dbReference>
<dbReference type="FunFam" id="2.40.37.10:FF:000003">
    <property type="entry name" value="Diaminopimelate decarboxylase"/>
    <property type="match status" value="1"/>
</dbReference>
<dbReference type="FunFam" id="3.20.20.10:FF:000003">
    <property type="entry name" value="Diaminopimelate decarboxylase"/>
    <property type="match status" value="1"/>
</dbReference>
<dbReference type="Gene3D" id="3.20.20.10">
    <property type="entry name" value="Alanine racemase"/>
    <property type="match status" value="1"/>
</dbReference>
<dbReference type="Gene3D" id="2.40.37.10">
    <property type="entry name" value="Lyase, Ornithine Decarboxylase, Chain A, domain 1"/>
    <property type="match status" value="1"/>
</dbReference>
<dbReference type="HAMAP" id="MF_02120">
    <property type="entry name" value="LysA"/>
    <property type="match status" value="1"/>
</dbReference>
<dbReference type="InterPro" id="IPR009006">
    <property type="entry name" value="Ala_racemase/Decarboxylase_C"/>
</dbReference>
<dbReference type="InterPro" id="IPR002986">
    <property type="entry name" value="DAP_deCOOHase_LysA"/>
</dbReference>
<dbReference type="InterPro" id="IPR022643">
    <property type="entry name" value="De-COase2_C"/>
</dbReference>
<dbReference type="InterPro" id="IPR022657">
    <property type="entry name" value="De-COase2_CS"/>
</dbReference>
<dbReference type="InterPro" id="IPR022644">
    <property type="entry name" value="De-COase2_N"/>
</dbReference>
<dbReference type="InterPro" id="IPR022653">
    <property type="entry name" value="De-COase2_pyr-phos_BS"/>
</dbReference>
<dbReference type="InterPro" id="IPR000183">
    <property type="entry name" value="Orn/DAP/Arg_de-COase"/>
</dbReference>
<dbReference type="InterPro" id="IPR029066">
    <property type="entry name" value="PLP-binding_barrel"/>
</dbReference>
<dbReference type="NCBIfam" id="TIGR01048">
    <property type="entry name" value="lysA"/>
    <property type="match status" value="1"/>
</dbReference>
<dbReference type="PANTHER" id="PTHR43727">
    <property type="entry name" value="DIAMINOPIMELATE DECARBOXYLASE"/>
    <property type="match status" value="1"/>
</dbReference>
<dbReference type="PANTHER" id="PTHR43727:SF2">
    <property type="entry name" value="GROUP IV DECARBOXYLASE"/>
    <property type="match status" value="1"/>
</dbReference>
<dbReference type="Pfam" id="PF02784">
    <property type="entry name" value="Orn_Arg_deC_N"/>
    <property type="match status" value="1"/>
</dbReference>
<dbReference type="Pfam" id="PF00278">
    <property type="entry name" value="Orn_DAP_Arg_deC"/>
    <property type="match status" value="1"/>
</dbReference>
<dbReference type="PRINTS" id="PR01181">
    <property type="entry name" value="DAPDCRBXLASE"/>
</dbReference>
<dbReference type="PRINTS" id="PR01179">
    <property type="entry name" value="ODADCRBXLASE"/>
</dbReference>
<dbReference type="SUPFAM" id="SSF50621">
    <property type="entry name" value="Alanine racemase C-terminal domain-like"/>
    <property type="match status" value="1"/>
</dbReference>
<dbReference type="SUPFAM" id="SSF51419">
    <property type="entry name" value="PLP-binding barrel"/>
    <property type="match status" value="1"/>
</dbReference>
<dbReference type="PROSITE" id="PS00878">
    <property type="entry name" value="ODR_DC_2_1"/>
    <property type="match status" value="1"/>
</dbReference>
<dbReference type="PROSITE" id="PS00879">
    <property type="entry name" value="ODR_DC_2_2"/>
    <property type="match status" value="1"/>
</dbReference>
<evidence type="ECO:0000255" key="1"/>
<evidence type="ECO:0000255" key="2">
    <source>
        <dbReference type="HAMAP-Rule" id="MF_02120"/>
    </source>
</evidence>
<protein>
    <recommendedName>
        <fullName evidence="2">Diaminopimelate decarboxylase</fullName>
        <shortName evidence="2">DAP decarboxylase</shortName>
        <shortName evidence="2">DAPDC</shortName>
        <ecNumber evidence="2">4.1.1.20</ecNumber>
    </recommendedName>
</protein>
<name>DCDA_HAEIN</name>
<comment type="function">
    <text evidence="2">Specifically catalyzes the decarboxylation of meso-diaminopimelate (meso-DAP) to L-lysine.</text>
</comment>
<comment type="catalytic activity">
    <reaction evidence="2">
        <text>meso-2,6-diaminopimelate + H(+) = L-lysine + CO2</text>
        <dbReference type="Rhea" id="RHEA:15101"/>
        <dbReference type="ChEBI" id="CHEBI:15378"/>
        <dbReference type="ChEBI" id="CHEBI:16526"/>
        <dbReference type="ChEBI" id="CHEBI:32551"/>
        <dbReference type="ChEBI" id="CHEBI:57791"/>
        <dbReference type="EC" id="4.1.1.20"/>
    </reaction>
</comment>
<comment type="cofactor">
    <cofactor evidence="2">
        <name>pyridoxal 5'-phosphate</name>
        <dbReference type="ChEBI" id="CHEBI:597326"/>
    </cofactor>
</comment>
<comment type="pathway">
    <text evidence="2">Amino-acid biosynthesis; L-lysine biosynthesis via DAP pathway; L-lysine from DL-2,6-diaminopimelate: step 1/1.</text>
</comment>
<comment type="subunit">
    <text evidence="2">Homodimer.</text>
</comment>
<comment type="similarity">
    <text evidence="2">Belongs to the Orn/Lys/Arg decarboxylase class-II family. LysA subfamily.</text>
</comment>
<sequence length="415" mass="46107">MNFFQYKHNKLYAEDMPVQQLAEQFGTPLYVYSRATLERHWHAFDSAFGNRPHLICFAVKSCSNIGVLNIMAKLGSGFDIVSQGELERVLAAGGDASKVVFSGVAKSREEIMRALEVRIRCFNVESVSELKHINQIAGEMGKIAPISLRVNPDVDAHTHPYISTGLKENKFGVSVNEAREVYKLASTLPNIKITGMDCHIGSQLTELQPFLDATDRLIVLMEQLKEDGITLKHLDLGGGLGVTYTDETPPHPSDYANALLEKLKNYPELEIILEPGRAISANAGILVAKVQYLKSNESRNFAITDTGMNDMIRPALYEAYMNIVEIDRTLEREKAIYDVVGPVCETSDFLGKQRELSIAEGDYIAQCSAGAYGASMSSNYNSRARTAEVLVDGDQSYLIRRRETLQELWALESTI</sequence>
<reference key="1">
    <citation type="journal article" date="1995" name="Science">
        <title>Whole-genome random sequencing and assembly of Haemophilus influenzae Rd.</title>
        <authorList>
            <person name="Fleischmann R.D."/>
            <person name="Adams M.D."/>
            <person name="White O."/>
            <person name="Clayton R.A."/>
            <person name="Kirkness E.F."/>
            <person name="Kerlavage A.R."/>
            <person name="Bult C.J."/>
            <person name="Tomb J.-F."/>
            <person name="Dougherty B.A."/>
            <person name="Merrick J.M."/>
            <person name="McKenney K."/>
            <person name="Sutton G.G."/>
            <person name="FitzHugh W."/>
            <person name="Fields C.A."/>
            <person name="Gocayne J.D."/>
            <person name="Scott J.D."/>
            <person name="Shirley R."/>
            <person name="Liu L.-I."/>
            <person name="Glodek A."/>
            <person name="Kelley J.M."/>
            <person name="Weidman J.F."/>
            <person name="Phillips C.A."/>
            <person name="Spriggs T."/>
            <person name="Hedblom E."/>
            <person name="Cotton M.D."/>
            <person name="Utterback T.R."/>
            <person name="Hanna M.C."/>
            <person name="Nguyen D.T."/>
            <person name="Saudek D.M."/>
            <person name="Brandon R.C."/>
            <person name="Fine L.D."/>
            <person name="Fritchman J.L."/>
            <person name="Fuhrmann J.L."/>
            <person name="Geoghagen N.S.M."/>
            <person name="Gnehm C.L."/>
            <person name="McDonald L.A."/>
            <person name="Small K.V."/>
            <person name="Fraser C.M."/>
            <person name="Smith H.O."/>
            <person name="Venter J.C."/>
        </authorList>
    </citation>
    <scope>NUCLEOTIDE SEQUENCE [LARGE SCALE GENOMIC DNA]</scope>
    <source>
        <strain>ATCC 51907 / DSM 11121 / KW20 / Rd</strain>
    </source>
</reference>
<organism>
    <name type="scientific">Haemophilus influenzae (strain ATCC 51907 / DSM 11121 / KW20 / Rd)</name>
    <dbReference type="NCBI Taxonomy" id="71421"/>
    <lineage>
        <taxon>Bacteria</taxon>
        <taxon>Pseudomonadati</taxon>
        <taxon>Pseudomonadota</taxon>
        <taxon>Gammaproteobacteria</taxon>
        <taxon>Pasteurellales</taxon>
        <taxon>Pasteurellaceae</taxon>
        <taxon>Haemophilus</taxon>
    </lineage>
</organism>
<proteinExistence type="inferred from homology"/>
<accession>P44316</accession>
<feature type="chain" id="PRO_0000149924" description="Diaminopimelate decarboxylase">
    <location>
        <begin position="1"/>
        <end position="415"/>
    </location>
</feature>
<feature type="active site" description="Proton donor" evidence="1">
    <location>
        <position position="344"/>
    </location>
</feature>
<feature type="binding site" evidence="2">
    <location>
        <position position="239"/>
    </location>
    <ligand>
        <name>pyridoxal 5'-phosphate</name>
        <dbReference type="ChEBI" id="CHEBI:597326"/>
    </ligand>
</feature>
<feature type="binding site" evidence="2">
    <location>
        <begin position="274"/>
        <end position="277"/>
    </location>
    <ligand>
        <name>pyridoxal 5'-phosphate</name>
        <dbReference type="ChEBI" id="CHEBI:597326"/>
    </ligand>
</feature>
<feature type="binding site" evidence="2">
    <location>
        <position position="277"/>
    </location>
    <ligand>
        <name>substrate</name>
    </ligand>
</feature>
<feature type="binding site" evidence="2">
    <location>
        <position position="313"/>
    </location>
    <ligand>
        <name>substrate</name>
    </ligand>
</feature>
<feature type="binding site" evidence="2">
    <location>
        <position position="317"/>
    </location>
    <ligand>
        <name>substrate</name>
    </ligand>
</feature>
<feature type="binding site" evidence="2">
    <location>
        <position position="345"/>
    </location>
    <ligand>
        <name>substrate</name>
    </ligand>
</feature>
<feature type="binding site" evidence="2">
    <location>
        <position position="372"/>
    </location>
    <ligand>
        <name>pyridoxal 5'-phosphate</name>
        <dbReference type="ChEBI" id="CHEBI:597326"/>
    </ligand>
</feature>
<feature type="binding site" evidence="2">
    <location>
        <position position="372"/>
    </location>
    <ligand>
        <name>substrate</name>
    </ligand>
</feature>
<feature type="modified residue" description="N6-(pyridoxal phosphate)lysine" evidence="2">
    <location>
        <position position="60"/>
    </location>
</feature>
<gene>
    <name evidence="2" type="primary">lysA</name>
    <name type="ordered locus">HI_0727</name>
</gene>
<keyword id="KW-0028">Amino-acid biosynthesis</keyword>
<keyword id="KW-0210">Decarboxylase</keyword>
<keyword id="KW-0456">Lyase</keyword>
<keyword id="KW-0457">Lysine biosynthesis</keyword>
<keyword id="KW-0663">Pyridoxal phosphate</keyword>
<keyword id="KW-1185">Reference proteome</keyword>